<evidence type="ECO:0000255" key="1"/>
<evidence type="ECO:0000255" key="2">
    <source>
        <dbReference type="PROSITE-ProRule" id="PRU00498"/>
    </source>
</evidence>
<evidence type="ECO:0000269" key="3">
    <source>
    </source>
</evidence>
<evidence type="ECO:0000303" key="4">
    <source>
    </source>
</evidence>
<dbReference type="EMBL" id="AB981314">
    <property type="protein sequence ID" value="BAP81866.1"/>
    <property type="molecule type" value="Genomic_DNA"/>
</dbReference>
<dbReference type="GlyCosmos" id="A0A097ZPE6">
    <property type="glycosylation" value="1 site, No reported glycans"/>
</dbReference>
<dbReference type="UniPathway" id="UPA00213"/>
<dbReference type="GO" id="GO:0016020">
    <property type="term" value="C:membrane"/>
    <property type="evidence" value="ECO:0007669"/>
    <property type="project" value="UniProtKB-SubCell"/>
</dbReference>
<dbReference type="GO" id="GO:0008381">
    <property type="term" value="F:mechanosensitive monoatomic ion channel activity"/>
    <property type="evidence" value="ECO:0007669"/>
    <property type="project" value="TreeGrafter"/>
</dbReference>
<dbReference type="GO" id="GO:0016114">
    <property type="term" value="P:terpenoid biosynthetic process"/>
    <property type="evidence" value="ECO:0007669"/>
    <property type="project" value="UniProtKB-UniPathway"/>
</dbReference>
<dbReference type="FunFam" id="1.10.1200.120:FF:000004">
    <property type="entry name" value="Ion channel, putative"/>
    <property type="match status" value="1"/>
</dbReference>
<dbReference type="Gene3D" id="1.10.1200.120">
    <property type="entry name" value="Large-conductance mechanosensitive channel, MscL, domain 1"/>
    <property type="match status" value="1"/>
</dbReference>
<dbReference type="InterPro" id="IPR037673">
    <property type="entry name" value="MSC/AndL"/>
</dbReference>
<dbReference type="InterPro" id="IPR036019">
    <property type="entry name" value="MscL_channel"/>
</dbReference>
<dbReference type="PANTHER" id="PTHR30266:SF2">
    <property type="entry name" value="LARGE-CONDUCTANCE MECHANOSENSITIVE CHANNEL"/>
    <property type="match status" value="1"/>
</dbReference>
<dbReference type="PANTHER" id="PTHR30266">
    <property type="entry name" value="MECHANOSENSITIVE CHANNEL MSCL"/>
    <property type="match status" value="1"/>
</dbReference>
<dbReference type="Pfam" id="PF01741">
    <property type="entry name" value="MscL"/>
    <property type="match status" value="1"/>
</dbReference>
<dbReference type="SUPFAM" id="SSF81330">
    <property type="entry name" value="Gated mechanosensitive channel"/>
    <property type="match status" value="1"/>
</dbReference>
<accession>A0A097ZPE6</accession>
<organism>
    <name type="scientific">Emericella variicolor</name>
    <name type="common">Aspergillus stellatus</name>
    <dbReference type="NCBI Taxonomy" id="1549217"/>
    <lineage>
        <taxon>Eukaryota</taxon>
        <taxon>Fungi</taxon>
        <taxon>Dikarya</taxon>
        <taxon>Ascomycota</taxon>
        <taxon>Pezizomycotina</taxon>
        <taxon>Eurotiomycetes</taxon>
        <taxon>Eurotiomycetidae</taxon>
        <taxon>Eurotiales</taxon>
        <taxon>Aspergillaceae</taxon>
        <taxon>Aspergillus</taxon>
        <taxon>Aspergillus subgen. Nidulantes</taxon>
    </lineage>
</organism>
<proteinExistence type="inferred from homology"/>
<keyword id="KW-0325">Glycoprotein</keyword>
<keyword id="KW-0472">Membrane</keyword>
<keyword id="KW-0812">Transmembrane</keyword>
<keyword id="KW-1133">Transmembrane helix</keyword>
<feature type="chain" id="PRO_0000436588" description="Anditomin synthesis protein L">
    <location>
        <begin position="1"/>
        <end position="177"/>
    </location>
</feature>
<feature type="transmembrane region" description="Helical" evidence="1">
    <location>
        <begin position="54"/>
        <end position="74"/>
    </location>
</feature>
<feature type="transmembrane region" description="Helical" evidence="1">
    <location>
        <begin position="117"/>
        <end position="137"/>
    </location>
</feature>
<feature type="glycosylation site" description="N-linked (GlcNAc...) asparagine" evidence="2">
    <location>
        <position position="165"/>
    </location>
</feature>
<reference key="1">
    <citation type="journal article" date="2014" name="J. Am. Chem. Soc.">
        <title>Complete biosynthetic pathway of anditomin: nature's sophisticated synthetic route to a complex fungal meroterpenoid.</title>
        <authorList>
            <person name="Matsuda Y."/>
            <person name="Wakimoto T."/>
            <person name="Mori T."/>
            <person name="Awakawa T."/>
            <person name="Abe I."/>
        </authorList>
    </citation>
    <scope>NUCLEOTIDE SEQUENCE [GENOMIC DNA]</scope>
    <scope>FUNCTION</scope>
    <source>
        <strain>ATCC 12069 / CBS 136.55 / IMI 60316 / NBRC 32302</strain>
    </source>
</reference>
<gene>
    <name evidence="4" type="primary">andL</name>
</gene>
<comment type="function">
    <text evidence="3">Part of the gene cluster that mediates the biosynthesis of anditomin, a fungal meroterpenoid (PubMed:25216349). The first step of the pathway is the synthesis of 3,5-dimethylorsellinic acid (DMOA) by the polyketide synthase andM (PubMed:25216349). DMOA is then converted to the phthalide compound 5,7-dihydroxy-4,6-dimethylphthalide (DHDMP) by the cytochrome P450 monooxygenase andK, which is further prenylated by the prenyltransferase andD to yield farnesyl-DHDMP (PubMed:25216349). Further epoxidation by the FAD-dependent monooxygenase andE leads to epoxyfarnesyl-DHDMP (PubMed:25216349). The next step involves the terpene cyclase andB that converts epoxyfarnesyl-DHDMP into preandiloid A through opening of the epoxide ring followed by the cyclization of the farnesyl moiety (PubMed:25216349). Preandiloid A is in turn oxidized at the C-3 hydroxyl group to yield preandiloid B by the dehydrogenase andC (PubMed:25216349). The dioxygenase andA is solely responsible for the dehydrogenation of preandiloid B leading to the enone preandiloid C, as well as for the intriguing structural rearrangement to generate the bicyclo[2.2.2]octane core, transforming preandiloid C into andiconin (PubMed:25216349). FAD-binding monooxygenase andJ then produces andilesin D which is reduced by dehydrogenase andI to yield andilesin A (PubMed:25216349). Action of acetyltransferase andG followed by a spontaneous acetate elimination leads then to andilesin B, which is in turn substrate of the short chain dehydrogenase andH to yield andilesin C (PubMed:25216349). Finally, the dioxygenase andF catalyzes the transformation of andilesin C to anditomin (PubMed:25216349). The exact role of andL within the anditomin biosynthetic pathway has not been identified yet (PubMed:25216349).</text>
</comment>
<comment type="pathway">
    <text evidence="3">Secondary metabolite biosynthesis; terpenoid biosynthesis.</text>
</comment>
<comment type="subcellular location">
    <subcellularLocation>
        <location evidence="1">Membrane</location>
        <topology evidence="1">Multi-pass membrane protein</topology>
    </subcellularLocation>
</comment>
<name>ANDL_EMEVA</name>
<protein>
    <recommendedName>
        <fullName evidence="4">Anditomin synthesis protein L</fullName>
    </recommendedName>
</protein>
<sequence>MRGLGGSTETALRLGSDAKDRVYRAWDGFIDFAARDNVLEVALGLIIAQAFTSVVNSFVSDIVLPLVSLLPFIMRNMDEKFAILSKGPHYQEGYNTIEQARDDGALVLAYGVFLEKIVNFLGISLTLYTLAQLYMVFSKRKIIKRTVKCKYCRKWISERALRCVNCSSWQDGREDVQ</sequence>